<feature type="chain" id="PRO_0000433451" description="ABC transporter G family member 32">
    <location>
        <begin position="1"/>
        <end position="1451"/>
    </location>
</feature>
<feature type="transmembrane region" description="Helical" evidence="2">
    <location>
        <begin position="531"/>
        <end position="551"/>
    </location>
</feature>
<feature type="transmembrane region" description="Helical" evidence="2">
    <location>
        <begin position="563"/>
        <end position="583"/>
    </location>
</feature>
<feature type="transmembrane region" description="Helical" evidence="2">
    <location>
        <begin position="618"/>
        <end position="638"/>
    </location>
</feature>
<feature type="transmembrane region" description="Helical" evidence="2">
    <location>
        <begin position="650"/>
        <end position="670"/>
    </location>
</feature>
<feature type="transmembrane region" description="Helical" evidence="2">
    <location>
        <begin position="674"/>
        <end position="694"/>
    </location>
</feature>
<feature type="transmembrane region" description="Helical" evidence="2">
    <location>
        <begin position="760"/>
        <end position="780"/>
    </location>
</feature>
<feature type="transmembrane region" description="Helical" evidence="2">
    <location>
        <begin position="1197"/>
        <end position="1217"/>
    </location>
</feature>
<feature type="transmembrane region" description="Helical" evidence="2">
    <location>
        <begin position="1237"/>
        <end position="1257"/>
    </location>
</feature>
<feature type="transmembrane region" description="Helical" evidence="2">
    <location>
        <begin position="1285"/>
        <end position="1305"/>
    </location>
</feature>
<feature type="transmembrane region" description="Helical" evidence="2">
    <location>
        <begin position="1312"/>
        <end position="1332"/>
    </location>
</feature>
<feature type="transmembrane region" description="Helical" evidence="2">
    <location>
        <begin position="1342"/>
        <end position="1362"/>
    </location>
</feature>
<feature type="transmembrane region" description="Helical" evidence="2">
    <location>
        <begin position="1373"/>
        <end position="1393"/>
    </location>
</feature>
<feature type="transmembrane region" description="Helical" evidence="2">
    <location>
        <begin position="1423"/>
        <end position="1443"/>
    </location>
</feature>
<feature type="domain" description="ABC transporter 1" evidence="3">
    <location>
        <begin position="162"/>
        <end position="435"/>
    </location>
</feature>
<feature type="domain" description="ABC transmembrane type-2 1" evidence="4">
    <location>
        <begin position="513"/>
        <end position="725"/>
    </location>
</feature>
<feature type="domain" description="ABC transporter 2" evidence="3">
    <location>
        <begin position="853"/>
        <end position="1105"/>
    </location>
</feature>
<feature type="domain" description="ABC transmembrane type-2 2" evidence="4">
    <location>
        <begin position="1178"/>
        <end position="1392"/>
    </location>
</feature>
<feature type="region of interest" description="Disordered" evidence="5">
    <location>
        <begin position="809"/>
        <end position="835"/>
    </location>
</feature>
<feature type="compositionally biased region" description="Basic and acidic residues" evidence="5">
    <location>
        <begin position="813"/>
        <end position="823"/>
    </location>
</feature>
<feature type="binding site" evidence="3">
    <location>
        <begin position="195"/>
        <end position="202"/>
    </location>
    <ligand>
        <name>ATP</name>
        <dbReference type="ChEBI" id="CHEBI:30616"/>
        <label>1</label>
    </ligand>
</feature>
<feature type="binding site" evidence="3">
    <location>
        <begin position="898"/>
        <end position="905"/>
    </location>
    <ligand>
        <name>ATP</name>
        <dbReference type="ChEBI" id="CHEBI:30616"/>
        <label>2</label>
    </ligand>
</feature>
<evidence type="ECO:0000250" key="1"/>
<evidence type="ECO:0000255" key="2"/>
<evidence type="ECO:0000255" key="3">
    <source>
        <dbReference type="PROSITE-ProRule" id="PRU00434"/>
    </source>
</evidence>
<evidence type="ECO:0000255" key="4">
    <source>
        <dbReference type="PROSITE-ProRule" id="PRU00442"/>
    </source>
</evidence>
<evidence type="ECO:0000256" key="5">
    <source>
        <dbReference type="SAM" id="MobiDB-lite"/>
    </source>
</evidence>
<evidence type="ECO:0000303" key="6">
    <source>
    </source>
</evidence>
<evidence type="ECO:0000303" key="7">
    <source>
    </source>
</evidence>
<evidence type="ECO:0000305" key="8"/>
<evidence type="ECO:0000312" key="9">
    <source>
        <dbReference type="EMBL" id="AAQ01165.1"/>
    </source>
</evidence>
<evidence type="ECO:0000312" key="10">
    <source>
        <dbReference type="EMBL" id="BAB93292.1"/>
    </source>
</evidence>
<evidence type="ECO:0000312" key="11">
    <source>
        <dbReference type="EMBL" id="BAF04869.1"/>
    </source>
</evidence>
<dbReference type="EMBL" id="AY332479">
    <property type="protein sequence ID" value="AAQ01165.1"/>
    <property type="molecule type" value="mRNA"/>
</dbReference>
<dbReference type="EMBL" id="AP003329">
    <property type="protein sequence ID" value="BAB93292.1"/>
    <property type="molecule type" value="Genomic_DNA"/>
</dbReference>
<dbReference type="EMBL" id="AP008207">
    <property type="protein sequence ID" value="BAF04869.1"/>
    <property type="molecule type" value="Genomic_DNA"/>
</dbReference>
<dbReference type="EMBL" id="AP014957">
    <property type="status" value="NOT_ANNOTATED_CDS"/>
    <property type="molecule type" value="Genomic_DNA"/>
</dbReference>
<dbReference type="RefSeq" id="XP_015622300.1">
    <property type="nucleotide sequence ID" value="XM_015766814.1"/>
</dbReference>
<dbReference type="SMR" id="Q8LQX2"/>
<dbReference type="FunCoup" id="Q8LQX2">
    <property type="interactions" value="107"/>
</dbReference>
<dbReference type="STRING" id="39947.Q8LQX2"/>
<dbReference type="PaxDb" id="39947-Q8LQX2"/>
<dbReference type="KEGG" id="dosa:Os01g0342700"/>
<dbReference type="eggNOG" id="KOG0065">
    <property type="taxonomic scope" value="Eukaryota"/>
</dbReference>
<dbReference type="InParanoid" id="Q8LQX2"/>
<dbReference type="OrthoDB" id="66620at2759"/>
<dbReference type="Proteomes" id="UP000000763">
    <property type="component" value="Chromosome 1"/>
</dbReference>
<dbReference type="Proteomes" id="UP000059680">
    <property type="component" value="Chromosome 1"/>
</dbReference>
<dbReference type="GO" id="GO:0016020">
    <property type="term" value="C:membrane"/>
    <property type="evidence" value="ECO:0007669"/>
    <property type="project" value="UniProtKB-SubCell"/>
</dbReference>
<dbReference type="GO" id="GO:0140359">
    <property type="term" value="F:ABC-type transporter activity"/>
    <property type="evidence" value="ECO:0007669"/>
    <property type="project" value="InterPro"/>
</dbReference>
<dbReference type="GO" id="GO:0005524">
    <property type="term" value="F:ATP binding"/>
    <property type="evidence" value="ECO:0007669"/>
    <property type="project" value="UniProtKB-KW"/>
</dbReference>
<dbReference type="GO" id="GO:0016887">
    <property type="term" value="F:ATP hydrolysis activity"/>
    <property type="evidence" value="ECO:0007669"/>
    <property type="project" value="InterPro"/>
</dbReference>
<dbReference type="CDD" id="cd03233">
    <property type="entry name" value="ABCG_PDR_domain1"/>
    <property type="match status" value="1"/>
</dbReference>
<dbReference type="CDD" id="cd03232">
    <property type="entry name" value="ABCG_PDR_domain2"/>
    <property type="match status" value="1"/>
</dbReference>
<dbReference type="FunFam" id="3.40.50.300:FF:000179">
    <property type="entry name" value="ABC transporter G family member 34"/>
    <property type="match status" value="1"/>
</dbReference>
<dbReference type="FunFam" id="3.40.50.300:FF:000059">
    <property type="entry name" value="ABC transporter G family member 40"/>
    <property type="match status" value="1"/>
</dbReference>
<dbReference type="Gene3D" id="3.40.50.300">
    <property type="entry name" value="P-loop containing nucleotide triphosphate hydrolases"/>
    <property type="match status" value="2"/>
</dbReference>
<dbReference type="InterPro" id="IPR003593">
    <property type="entry name" value="AAA+_ATPase"/>
</dbReference>
<dbReference type="InterPro" id="IPR013525">
    <property type="entry name" value="ABC2_TM"/>
</dbReference>
<dbReference type="InterPro" id="IPR003439">
    <property type="entry name" value="ABC_transporter-like_ATP-bd"/>
</dbReference>
<dbReference type="InterPro" id="IPR034001">
    <property type="entry name" value="ABCG_PDR_1"/>
</dbReference>
<dbReference type="InterPro" id="IPR034003">
    <property type="entry name" value="ABCG_PDR_2"/>
</dbReference>
<dbReference type="InterPro" id="IPR027417">
    <property type="entry name" value="P-loop_NTPase"/>
</dbReference>
<dbReference type="InterPro" id="IPR013581">
    <property type="entry name" value="PDR_assoc"/>
</dbReference>
<dbReference type="PANTHER" id="PTHR48040:SF20">
    <property type="entry name" value="PLEIOTROPIC DRUG RESISTANCE PROTEIN 1"/>
    <property type="match status" value="1"/>
</dbReference>
<dbReference type="PANTHER" id="PTHR48040">
    <property type="entry name" value="PLEIOTROPIC DRUG RESISTANCE PROTEIN 1-LIKE ISOFORM X1"/>
    <property type="match status" value="1"/>
</dbReference>
<dbReference type="Pfam" id="PF01061">
    <property type="entry name" value="ABC2_membrane"/>
    <property type="match status" value="2"/>
</dbReference>
<dbReference type="Pfam" id="PF00005">
    <property type="entry name" value="ABC_tran"/>
    <property type="match status" value="2"/>
</dbReference>
<dbReference type="Pfam" id="PF08370">
    <property type="entry name" value="PDR_assoc"/>
    <property type="match status" value="1"/>
</dbReference>
<dbReference type="SMART" id="SM00382">
    <property type="entry name" value="AAA"/>
    <property type="match status" value="2"/>
</dbReference>
<dbReference type="SUPFAM" id="SSF52540">
    <property type="entry name" value="P-loop containing nucleoside triphosphate hydrolases"/>
    <property type="match status" value="2"/>
</dbReference>
<dbReference type="PROSITE" id="PS50893">
    <property type="entry name" value="ABC_TRANSPORTER_2"/>
    <property type="match status" value="2"/>
</dbReference>
<proteinExistence type="evidence at transcript level"/>
<name>AB32G_ORYSJ</name>
<accession>Q8LQX2</accession>
<reference key="1">
    <citation type="submission" date="2003-06" db="EMBL/GenBank/DDBJ databases">
        <title>Isolation and characterization of a rice ATPase gene.</title>
        <authorList>
            <person name="Yao Q."/>
            <person name="Peng R."/>
            <person name="Xiong A."/>
        </authorList>
    </citation>
    <scope>NUCLEOTIDE SEQUENCE [MRNA]</scope>
</reference>
<reference key="2">
    <citation type="journal article" date="2002" name="Nature">
        <title>The genome sequence and structure of rice chromosome 1.</title>
        <authorList>
            <person name="Sasaki T."/>
            <person name="Matsumoto T."/>
            <person name="Yamamoto K."/>
            <person name="Sakata K."/>
            <person name="Baba T."/>
            <person name="Katayose Y."/>
            <person name="Wu J."/>
            <person name="Niimura Y."/>
            <person name="Cheng Z."/>
            <person name="Nagamura Y."/>
            <person name="Antonio B.A."/>
            <person name="Kanamori H."/>
            <person name="Hosokawa S."/>
            <person name="Masukawa M."/>
            <person name="Arikawa K."/>
            <person name="Chiden Y."/>
            <person name="Hayashi M."/>
            <person name="Okamoto M."/>
            <person name="Ando T."/>
            <person name="Aoki H."/>
            <person name="Arita K."/>
            <person name="Hamada M."/>
            <person name="Harada C."/>
            <person name="Hijishita S."/>
            <person name="Honda M."/>
            <person name="Ichikawa Y."/>
            <person name="Idonuma A."/>
            <person name="Iijima M."/>
            <person name="Ikeda M."/>
            <person name="Ikeno M."/>
            <person name="Ito S."/>
            <person name="Ito T."/>
            <person name="Ito Y."/>
            <person name="Ito Y."/>
            <person name="Iwabuchi A."/>
            <person name="Kamiya K."/>
            <person name="Karasawa W."/>
            <person name="Katagiri S."/>
            <person name="Kikuta A."/>
            <person name="Kobayashi N."/>
            <person name="Kono I."/>
            <person name="Machita K."/>
            <person name="Maehara T."/>
            <person name="Mizuno H."/>
            <person name="Mizubayashi T."/>
            <person name="Mukai Y."/>
            <person name="Nagasaki H."/>
            <person name="Nakashima M."/>
            <person name="Nakama Y."/>
            <person name="Nakamichi Y."/>
            <person name="Nakamura M."/>
            <person name="Namiki N."/>
            <person name="Negishi M."/>
            <person name="Ohta I."/>
            <person name="Ono N."/>
            <person name="Saji S."/>
            <person name="Sakai K."/>
            <person name="Shibata M."/>
            <person name="Shimokawa T."/>
            <person name="Shomura A."/>
            <person name="Song J."/>
            <person name="Takazaki Y."/>
            <person name="Terasawa K."/>
            <person name="Tsuji K."/>
            <person name="Waki K."/>
            <person name="Yamagata H."/>
            <person name="Yamane H."/>
            <person name="Yoshiki S."/>
            <person name="Yoshihara R."/>
            <person name="Yukawa K."/>
            <person name="Zhong H."/>
            <person name="Iwama H."/>
            <person name="Endo T."/>
            <person name="Ito H."/>
            <person name="Hahn J.H."/>
            <person name="Kim H.-I."/>
            <person name="Eun M.-Y."/>
            <person name="Yano M."/>
            <person name="Jiang J."/>
            <person name="Gojobori T."/>
        </authorList>
    </citation>
    <scope>NUCLEOTIDE SEQUENCE [LARGE SCALE GENOMIC DNA]</scope>
    <source>
        <strain>cv. Nipponbare</strain>
    </source>
</reference>
<reference key="3">
    <citation type="journal article" date="2005" name="Nature">
        <title>The map-based sequence of the rice genome.</title>
        <authorList>
            <consortium name="International rice genome sequencing project (IRGSP)"/>
        </authorList>
    </citation>
    <scope>NUCLEOTIDE SEQUENCE [LARGE SCALE GENOMIC DNA]</scope>
    <source>
        <strain>cv. Nipponbare</strain>
    </source>
</reference>
<reference key="4">
    <citation type="journal article" date="2008" name="Nucleic Acids Res.">
        <title>The rice annotation project database (RAP-DB): 2008 update.</title>
        <authorList>
            <consortium name="The rice annotation project (RAP)"/>
        </authorList>
    </citation>
    <scope>GENOME REANNOTATION</scope>
    <source>
        <strain>cv. Nipponbare</strain>
    </source>
</reference>
<reference key="5">
    <citation type="journal article" date="2013" name="Rice">
        <title>Improvement of the Oryza sativa Nipponbare reference genome using next generation sequence and optical map data.</title>
        <authorList>
            <person name="Kawahara Y."/>
            <person name="de la Bastide M."/>
            <person name="Hamilton J.P."/>
            <person name="Kanamori H."/>
            <person name="McCombie W.R."/>
            <person name="Ouyang S."/>
            <person name="Schwartz D.C."/>
            <person name="Tanaka T."/>
            <person name="Wu J."/>
            <person name="Zhou S."/>
            <person name="Childs K.L."/>
            <person name="Davidson R.M."/>
            <person name="Lin H."/>
            <person name="Quesada-Ocampo L."/>
            <person name="Vaillancourt B."/>
            <person name="Sakai H."/>
            <person name="Lee S.S."/>
            <person name="Kim J."/>
            <person name="Numa H."/>
            <person name="Itoh T."/>
            <person name="Buell C.R."/>
            <person name="Matsumoto T."/>
        </authorList>
    </citation>
    <scope>GENOME REANNOTATION</scope>
    <source>
        <strain>cv. Nipponbare</strain>
    </source>
</reference>
<reference key="6">
    <citation type="journal article" date="2006" name="FEBS Lett.">
        <title>Organization and function of the plant pleiotropic drug resistance ABC transporter family.</title>
        <authorList>
            <person name="Crouzet J."/>
            <person name="Trombik T."/>
            <person name="Fraysse A.S."/>
            <person name="Boutry M."/>
        </authorList>
    </citation>
    <scope>GENE FAMILY</scope>
    <scope>NOMENCLATURE</scope>
</reference>
<reference key="7">
    <citation type="journal article" date="2008" name="Trends Plant Sci.">
        <title>Plant ABC proteins - a unified nomenclature and updated inventory.</title>
        <authorList>
            <person name="Verrier P.J."/>
            <person name="Bird D."/>
            <person name="Burla B."/>
            <person name="Dassa E."/>
            <person name="Forestier C."/>
            <person name="Geisler M."/>
            <person name="Klein M."/>
            <person name="Kolukisaoglu H.U."/>
            <person name="Lee Y."/>
            <person name="Martinoia E."/>
            <person name="Murphy A."/>
            <person name="Rea P.A."/>
            <person name="Samuels L."/>
            <person name="Schulz B."/>
            <person name="Spalding E.J."/>
            <person name="Yazaki K."/>
            <person name="Theodoulou F.L."/>
        </authorList>
    </citation>
    <scope>GENE FAMILY</scope>
    <scope>NOMENCLATURE</scope>
</reference>
<sequence>MAREIHKIASLRRESSLWRRGDDGVYFSRSSTGASSSRFRDEEDDEEALRWAALERLPTRDRVRRGILLQAAEGNGEKVEVDVGRMGARESRALIARLIRAADDDHALFLLKLKDRMDRVGIDYPTIEVRFEKLEVEAEVHVGNRGLPTLLNSIINTVQAIGNALHISPTRKQPMTVLHDVSGIIKPRRMTLLLGPPGSGKTTLLLALAGKLEDNLKVSGKVTYNGHGMDEFVPQRTAAYISQHDLHIGEMTVRETLAFSARCQGVGSRYDMLTELSRREKAENIKPDQDIDVYMKASAIGGQESSVVTEYILKILGLDICADTVVGNDMLRGVSGGQRKRVTTGEMLVGPARALFMDEISTGLDSSTTYQIVNSIGQTIRILGGTAVISLLQPAPETYNLFDDIILLSDGQIVYQGAREHVLEFFELMGFRCPQRKGVADFLQEVTSKKDQEQYWYRNDIPYSFVPVKQFADAFRSFHVGQSIQNELSEPFDRSRSHPASLATSKFGVSWMALLKANIDRELLLMKRNSFVYIFKAANLTLTAFLVMTTFLRTKMRHDTTYGTIYMGALYFALDTIMFNGFAELGMTVMKLPVFFKQRDLLFFPAWTYTIPSWILQIPVTFFEVGVYVFTTYYVVGFDPNVSRFFKQYLLLVALNQMSSSLFRFIAGIGRDMVVSQTFGPLSLLAFTALGGFILARPDVKKWWIWGYWISPLSYAQNAISTNEFLGRSWNKSFPGQNDTVGISILKSRGIFTEAKWYWIGFGALIGYTLLFNLLYTVALSFLKPLGDSYPSVPEDALKEKRANQTGEILDSCEEKKSRKKEQSQSVNQKHWNNTAESSQIRQGILPFAQLSLSFNDIKYSVDMPEAMTAQGVTEERLLLLKGVSGSFRPGVLTALMGVSGAGKTTLMDVLAGRKTGGYIEGDITISGYPKKQETFARISGYCEQNDIHSPHVTVYESLVFSAWMRLPSEVDSETRKMFIEEVMELVELTSLRGALVGLPGVNGLSTEQRKRLTVAVELVANPSIIFMDEPTSGLDARAAAIVMRTVRKTVDTGRTVVCTIHQPSIDIFEAFDELFLMKRGGEEIYVGPLGQNSSKLIEYFEGIEGISKIKDGYNPATWMLEVTSTTQEEMLGIDFSEIYKRSELYQRNKELIQDLSTPTPGSTDLHFPTQYSRSFFTQCIACLWKHKLSYWRNPSYTAVRLLFTIIIALLFGTMFWDLGRKTKKEQDLFNAVGSMYAAVLYIGIQNSGCVQPVVVVERTVFYRERAAGMYSGFPYAFGQVAIELPYILVQTLVYGVLVYSMIGFEWTVAKFIWYLFFMYFTLLYFTFFGMMAVGLTPNESIAAIISPAIYNAWNLFSGYLIPRPKIPVWWRWYCWICPVAWTLYGLVASQFGNIQTKLDGKDQTVAQFITEYYGFHHDLLWLVAVVHVVFTVMFAFLFSFAIMKFNFQRR</sequence>
<comment type="function">
    <text evidence="1">May be a general defense protein.</text>
</comment>
<comment type="subcellular location">
    <subcellularLocation>
        <location evidence="2">Membrane</location>
        <topology evidence="2">Multi-pass membrane protein</topology>
    </subcellularLocation>
</comment>
<comment type="similarity">
    <text evidence="8">Belongs to the ABC transporter superfamily. ABCG family. PDR (TC 3.A.1.205) subfamily.</text>
</comment>
<keyword id="KW-0067">ATP-binding</keyword>
<keyword id="KW-0472">Membrane</keyword>
<keyword id="KW-0547">Nucleotide-binding</keyword>
<keyword id="KW-1185">Reference proteome</keyword>
<keyword id="KW-0677">Repeat</keyword>
<keyword id="KW-0812">Transmembrane</keyword>
<keyword id="KW-1133">Transmembrane helix</keyword>
<keyword id="KW-0813">Transport</keyword>
<organism>
    <name type="scientific">Oryza sativa subsp. japonica</name>
    <name type="common">Rice</name>
    <dbReference type="NCBI Taxonomy" id="39947"/>
    <lineage>
        <taxon>Eukaryota</taxon>
        <taxon>Viridiplantae</taxon>
        <taxon>Streptophyta</taxon>
        <taxon>Embryophyta</taxon>
        <taxon>Tracheophyta</taxon>
        <taxon>Spermatophyta</taxon>
        <taxon>Magnoliopsida</taxon>
        <taxon>Liliopsida</taxon>
        <taxon>Poales</taxon>
        <taxon>Poaceae</taxon>
        <taxon>BOP clade</taxon>
        <taxon>Oryzoideae</taxon>
        <taxon>Oryzeae</taxon>
        <taxon>Oryzinae</taxon>
        <taxon>Oryza</taxon>
        <taxon>Oryza sativa</taxon>
    </lineage>
</organism>
<gene>
    <name evidence="7" type="primary">ABCG32</name>
    <name evidence="6" type="synonym">PDR16</name>
    <name evidence="9" type="synonym">PDR5</name>
    <name evidence="11" type="ordered locus">Os01g0342700</name>
    <name type="ordered locus">LOC_Os01g24010</name>
    <name evidence="10" type="ORF">B1045F02.15</name>
</gene>
<protein>
    <recommendedName>
        <fullName evidence="7">ABC transporter G family member 32</fullName>
        <shortName evidence="7">OsABCG32</shortName>
    </recommendedName>
    <alternativeName>
        <fullName evidence="6">Pleiotropic drug resistance protein 16</fullName>
        <shortName evidence="6">OsPDR16</shortName>
    </alternativeName>
</protein>